<protein>
    <recommendedName>
        <fullName>Glycerol-3-phosphate dehydrogenase [NAD(+)], cytoplasmic</fullName>
        <shortName>GPD-C</shortName>
        <shortName>GPDH-C</shortName>
        <ecNumber evidence="4">1.1.1.8</ecNumber>
    </recommendedName>
</protein>
<reference key="1">
    <citation type="submission" date="2004-11" db="EMBL/GenBank/DDBJ databases">
        <authorList>
            <consortium name="The German cDNA consortium"/>
        </authorList>
    </citation>
    <scope>NUCLEOTIDE SEQUENCE [LARGE SCALE MRNA]</scope>
    <source>
        <tissue>Kidney</tissue>
    </source>
</reference>
<name>GPDA_PONAB</name>
<gene>
    <name type="primary">GPD1</name>
</gene>
<proteinExistence type="evidence at transcript level"/>
<dbReference type="EC" id="1.1.1.8" evidence="4"/>
<dbReference type="EMBL" id="CR858331">
    <property type="protein sequence ID" value="CAH90567.1"/>
    <property type="molecule type" value="mRNA"/>
</dbReference>
<dbReference type="RefSeq" id="NP_001125302.1">
    <property type="nucleotide sequence ID" value="NM_001131830.1"/>
</dbReference>
<dbReference type="SMR" id="Q5RCE0"/>
<dbReference type="FunCoup" id="Q5RCE0">
    <property type="interactions" value="743"/>
</dbReference>
<dbReference type="STRING" id="9601.ENSPPYP00000005145"/>
<dbReference type="Ensembl" id="ENSPPYT00000005346.2">
    <property type="protein sequence ID" value="ENSPPYP00000005145.1"/>
    <property type="gene ID" value="ENSPPYG00000004507.2"/>
</dbReference>
<dbReference type="GeneID" id="100172201"/>
<dbReference type="KEGG" id="pon:100172201"/>
<dbReference type="CTD" id="2819"/>
<dbReference type="eggNOG" id="KOG2711">
    <property type="taxonomic scope" value="Eukaryota"/>
</dbReference>
<dbReference type="GeneTree" id="ENSGT00390000003114"/>
<dbReference type="HOGENOM" id="CLU_033449_2_2_1"/>
<dbReference type="InParanoid" id="Q5RCE0"/>
<dbReference type="OMA" id="NRMFGNM"/>
<dbReference type="OrthoDB" id="10263760at2759"/>
<dbReference type="TreeFam" id="TF300836"/>
<dbReference type="Proteomes" id="UP000001595">
    <property type="component" value="Chromosome 12"/>
</dbReference>
<dbReference type="GO" id="GO:0005829">
    <property type="term" value="C:cytosol"/>
    <property type="evidence" value="ECO:0007669"/>
    <property type="project" value="Ensembl"/>
</dbReference>
<dbReference type="GO" id="GO:0141152">
    <property type="term" value="F:glycerol-3-phosphate dehydrogenase (NAD+) activity"/>
    <property type="evidence" value="ECO:0007669"/>
    <property type="project" value="UniProtKB-EC"/>
</dbReference>
<dbReference type="GO" id="GO:0051287">
    <property type="term" value="F:NAD binding"/>
    <property type="evidence" value="ECO:0007669"/>
    <property type="project" value="InterPro"/>
</dbReference>
<dbReference type="GO" id="GO:0042803">
    <property type="term" value="F:protein homodimerization activity"/>
    <property type="evidence" value="ECO:0007669"/>
    <property type="project" value="InterPro"/>
</dbReference>
<dbReference type="GO" id="GO:0071320">
    <property type="term" value="P:cellular response to cAMP"/>
    <property type="evidence" value="ECO:0007669"/>
    <property type="project" value="Ensembl"/>
</dbReference>
<dbReference type="GO" id="GO:0071356">
    <property type="term" value="P:cellular response to tumor necrosis factor"/>
    <property type="evidence" value="ECO:0007669"/>
    <property type="project" value="Ensembl"/>
</dbReference>
<dbReference type="GO" id="GO:0006094">
    <property type="term" value="P:gluconeogenesis"/>
    <property type="evidence" value="ECO:0007669"/>
    <property type="project" value="Ensembl"/>
</dbReference>
<dbReference type="GO" id="GO:0046168">
    <property type="term" value="P:glycerol-3-phosphate catabolic process"/>
    <property type="evidence" value="ECO:0007669"/>
    <property type="project" value="InterPro"/>
</dbReference>
<dbReference type="GO" id="GO:0006127">
    <property type="term" value="P:glycerol-3-phosphate shuttle"/>
    <property type="evidence" value="ECO:0007669"/>
    <property type="project" value="Ensembl"/>
</dbReference>
<dbReference type="GO" id="GO:0045821">
    <property type="term" value="P:positive regulation of glycolytic process"/>
    <property type="evidence" value="ECO:0007669"/>
    <property type="project" value="Ensembl"/>
</dbReference>
<dbReference type="FunFam" id="3.40.50.720:FF:000088">
    <property type="entry name" value="Glycerol-3-phosphate dehydrogenase [NAD(+)]"/>
    <property type="match status" value="1"/>
</dbReference>
<dbReference type="FunFam" id="1.10.1040.10:FF:000084">
    <property type="entry name" value="Glycerol-3-phosphate dehydrogenase [NAD(+)], cytoplasmic"/>
    <property type="match status" value="1"/>
</dbReference>
<dbReference type="Gene3D" id="1.10.1040.10">
    <property type="entry name" value="N-(1-d-carboxylethyl)-l-norvaline Dehydrogenase, domain 2"/>
    <property type="match status" value="1"/>
</dbReference>
<dbReference type="Gene3D" id="3.40.50.720">
    <property type="entry name" value="NAD(P)-binding Rossmann-like Domain"/>
    <property type="match status" value="1"/>
</dbReference>
<dbReference type="InterPro" id="IPR008927">
    <property type="entry name" value="6-PGluconate_DH-like_C_sf"/>
</dbReference>
<dbReference type="InterPro" id="IPR013328">
    <property type="entry name" value="6PGD_dom2"/>
</dbReference>
<dbReference type="InterPro" id="IPR006168">
    <property type="entry name" value="G3P_DH_NAD-dep"/>
</dbReference>
<dbReference type="InterPro" id="IPR006109">
    <property type="entry name" value="G3P_DH_NAD-dep_C"/>
</dbReference>
<dbReference type="InterPro" id="IPR017751">
    <property type="entry name" value="G3P_DH_NAD-dep_euk"/>
</dbReference>
<dbReference type="InterPro" id="IPR011128">
    <property type="entry name" value="G3P_DH_NAD-dep_N"/>
</dbReference>
<dbReference type="InterPro" id="IPR036291">
    <property type="entry name" value="NAD(P)-bd_dom_sf"/>
</dbReference>
<dbReference type="NCBIfam" id="TIGR03376">
    <property type="entry name" value="glycerol3P_DH"/>
    <property type="match status" value="1"/>
</dbReference>
<dbReference type="PANTHER" id="PTHR11728">
    <property type="entry name" value="GLYCEROL-3-PHOSPHATE DEHYDROGENASE"/>
    <property type="match status" value="1"/>
</dbReference>
<dbReference type="PANTHER" id="PTHR11728:SF32">
    <property type="entry name" value="GLYCEROL-3-PHOSPHATE DEHYDROGENASE [NAD(+)], CYTOPLASMIC"/>
    <property type="match status" value="1"/>
</dbReference>
<dbReference type="Pfam" id="PF07479">
    <property type="entry name" value="NAD_Gly3P_dh_C"/>
    <property type="match status" value="1"/>
</dbReference>
<dbReference type="Pfam" id="PF01210">
    <property type="entry name" value="NAD_Gly3P_dh_N"/>
    <property type="match status" value="1"/>
</dbReference>
<dbReference type="PIRSF" id="PIRSF000114">
    <property type="entry name" value="Glycerol-3-P_dh"/>
    <property type="match status" value="1"/>
</dbReference>
<dbReference type="PRINTS" id="PR00077">
    <property type="entry name" value="GPDHDRGNASE"/>
</dbReference>
<dbReference type="SUPFAM" id="SSF48179">
    <property type="entry name" value="6-phosphogluconate dehydrogenase C-terminal domain-like"/>
    <property type="match status" value="1"/>
</dbReference>
<dbReference type="SUPFAM" id="SSF51735">
    <property type="entry name" value="NAD(P)-binding Rossmann-fold domains"/>
    <property type="match status" value="1"/>
</dbReference>
<dbReference type="PROSITE" id="PS00957">
    <property type="entry name" value="NAD_G3PDH"/>
    <property type="match status" value="1"/>
</dbReference>
<feature type="chain" id="PRO_0000262290" description="Glycerol-3-phosphate dehydrogenase [NAD(+)], cytoplasmic">
    <location>
        <begin position="1"/>
        <end position="349"/>
    </location>
</feature>
<feature type="active site" description="Proton acceptor" evidence="5">
    <location>
        <position position="204"/>
    </location>
</feature>
<feature type="binding site" evidence="4">
    <location>
        <begin position="10"/>
        <end position="15"/>
    </location>
    <ligand>
        <name>NAD(+)</name>
        <dbReference type="ChEBI" id="CHEBI:57540"/>
    </ligand>
</feature>
<feature type="binding site" evidence="1">
    <location>
        <position position="120"/>
    </location>
    <ligand>
        <name>substrate</name>
    </ligand>
</feature>
<feature type="binding site" evidence="4">
    <location>
        <position position="153"/>
    </location>
    <ligand>
        <name>NAD(+)</name>
        <dbReference type="ChEBI" id="CHEBI:57540"/>
    </ligand>
</feature>
<feature type="binding site" evidence="1">
    <location>
        <begin position="269"/>
        <end position="270"/>
    </location>
    <ligand>
        <name>substrate</name>
    </ligand>
</feature>
<feature type="binding site" evidence="4">
    <location>
        <position position="269"/>
    </location>
    <ligand>
        <name>NAD(+)</name>
        <dbReference type="ChEBI" id="CHEBI:57540"/>
    </ligand>
</feature>
<feature type="binding site" evidence="4">
    <location>
        <position position="296"/>
    </location>
    <ligand>
        <name>NAD(+)</name>
        <dbReference type="ChEBI" id="CHEBI:57540"/>
    </ligand>
</feature>
<feature type="binding site" evidence="4">
    <location>
        <position position="298"/>
    </location>
    <ligand>
        <name>NAD(+)</name>
        <dbReference type="ChEBI" id="CHEBI:57540"/>
    </ligand>
</feature>
<feature type="modified residue" description="Phosphoserine" evidence="4">
    <location>
        <position position="154"/>
    </location>
</feature>
<feature type="modified residue" description="N6-succinyllysine" evidence="3">
    <location>
        <position position="289"/>
    </location>
</feature>
<feature type="modified residue" description="Phosphotyrosine" evidence="2">
    <location>
        <position position="326"/>
    </location>
</feature>
<organism>
    <name type="scientific">Pongo abelii</name>
    <name type="common">Sumatran orangutan</name>
    <name type="synonym">Pongo pygmaeus abelii</name>
    <dbReference type="NCBI Taxonomy" id="9601"/>
    <lineage>
        <taxon>Eukaryota</taxon>
        <taxon>Metazoa</taxon>
        <taxon>Chordata</taxon>
        <taxon>Craniata</taxon>
        <taxon>Vertebrata</taxon>
        <taxon>Euteleostomi</taxon>
        <taxon>Mammalia</taxon>
        <taxon>Eutheria</taxon>
        <taxon>Euarchontoglires</taxon>
        <taxon>Primates</taxon>
        <taxon>Haplorrhini</taxon>
        <taxon>Catarrhini</taxon>
        <taxon>Hominidae</taxon>
        <taxon>Pongo</taxon>
    </lineage>
</organism>
<keyword id="KW-0963">Cytoplasm</keyword>
<keyword id="KW-0520">NAD</keyword>
<keyword id="KW-0560">Oxidoreductase</keyword>
<keyword id="KW-0597">Phosphoprotein</keyword>
<keyword id="KW-1185">Reference proteome</keyword>
<evidence type="ECO:0000250" key="1"/>
<evidence type="ECO:0000250" key="2">
    <source>
        <dbReference type="UniProtKB" id="O35077"/>
    </source>
</evidence>
<evidence type="ECO:0000250" key="3">
    <source>
        <dbReference type="UniProtKB" id="P13707"/>
    </source>
</evidence>
<evidence type="ECO:0000250" key="4">
    <source>
        <dbReference type="UniProtKB" id="P21695"/>
    </source>
</evidence>
<evidence type="ECO:0000255" key="5"/>
<evidence type="ECO:0000305" key="6"/>
<sequence>MASKKVCIVGSGNWGSAIAKIVGGNAAQLAQFDPRVTMWVFEEDIGGKKLTEIINTQHENVKYLPGHKLPPNVVAVPDVVQAAADADILIFVVPHQFIGKICDQLKGHLKANATGISLIKGVDEGPNGLKLISEVIGEHLGIPMSVLMGANIASEVADEKFCETTIGCKDPAQGQLLKELMQTPNFRITVVQEVDTVEICGALKNVVAVGAGFCDGLGFGDNTKAAVIRLGLMEMIAFAKLFRSGPVSSATFLESCGVADLITTCYGGRNRKVAEAFARTGKSIEQLEKELLNGQKLQGPETARELHSILQHKGLVDKFPLFMAVYKVCYEGQPVGEFIRCLQNHPEHM</sequence>
<accession>Q5RCE0</accession>
<comment type="function">
    <text evidence="4">Has glycerol-3-phosphate dehydrogenase activity.</text>
</comment>
<comment type="catalytic activity">
    <reaction evidence="4">
        <text>sn-glycerol 3-phosphate + NAD(+) = dihydroxyacetone phosphate + NADH + H(+)</text>
        <dbReference type="Rhea" id="RHEA:11092"/>
        <dbReference type="ChEBI" id="CHEBI:15378"/>
        <dbReference type="ChEBI" id="CHEBI:57540"/>
        <dbReference type="ChEBI" id="CHEBI:57597"/>
        <dbReference type="ChEBI" id="CHEBI:57642"/>
        <dbReference type="ChEBI" id="CHEBI:57945"/>
        <dbReference type="EC" id="1.1.1.8"/>
    </reaction>
    <physiologicalReaction direction="left-to-right" evidence="4">
        <dbReference type="Rhea" id="RHEA:11093"/>
    </physiologicalReaction>
</comment>
<comment type="subunit">
    <text evidence="1">Homodimer.</text>
</comment>
<comment type="subcellular location">
    <subcellularLocation>
        <location evidence="4">Cytoplasm</location>
    </subcellularLocation>
</comment>
<comment type="similarity">
    <text evidence="6">Belongs to the NAD-dependent glycerol-3-phosphate dehydrogenase family.</text>
</comment>